<reference key="1">
    <citation type="journal article" date="2000" name="Science">
        <title>The genome sequence of Drosophila melanogaster.</title>
        <authorList>
            <person name="Adams M.D."/>
            <person name="Celniker S.E."/>
            <person name="Holt R.A."/>
            <person name="Evans C.A."/>
            <person name="Gocayne J.D."/>
            <person name="Amanatides P.G."/>
            <person name="Scherer S.E."/>
            <person name="Li P.W."/>
            <person name="Hoskins R.A."/>
            <person name="Galle R.F."/>
            <person name="George R.A."/>
            <person name="Lewis S.E."/>
            <person name="Richards S."/>
            <person name="Ashburner M."/>
            <person name="Henderson S.N."/>
            <person name="Sutton G.G."/>
            <person name="Wortman J.R."/>
            <person name="Yandell M.D."/>
            <person name="Zhang Q."/>
            <person name="Chen L.X."/>
            <person name="Brandon R.C."/>
            <person name="Rogers Y.-H.C."/>
            <person name="Blazej R.G."/>
            <person name="Champe M."/>
            <person name="Pfeiffer B.D."/>
            <person name="Wan K.H."/>
            <person name="Doyle C."/>
            <person name="Baxter E.G."/>
            <person name="Helt G."/>
            <person name="Nelson C.R."/>
            <person name="Miklos G.L.G."/>
            <person name="Abril J.F."/>
            <person name="Agbayani A."/>
            <person name="An H.-J."/>
            <person name="Andrews-Pfannkoch C."/>
            <person name="Baldwin D."/>
            <person name="Ballew R.M."/>
            <person name="Basu A."/>
            <person name="Baxendale J."/>
            <person name="Bayraktaroglu L."/>
            <person name="Beasley E.M."/>
            <person name="Beeson K.Y."/>
            <person name="Benos P.V."/>
            <person name="Berman B.P."/>
            <person name="Bhandari D."/>
            <person name="Bolshakov S."/>
            <person name="Borkova D."/>
            <person name="Botchan M.R."/>
            <person name="Bouck J."/>
            <person name="Brokstein P."/>
            <person name="Brottier P."/>
            <person name="Burtis K.C."/>
            <person name="Busam D.A."/>
            <person name="Butler H."/>
            <person name="Cadieu E."/>
            <person name="Center A."/>
            <person name="Chandra I."/>
            <person name="Cherry J.M."/>
            <person name="Cawley S."/>
            <person name="Dahlke C."/>
            <person name="Davenport L.B."/>
            <person name="Davies P."/>
            <person name="de Pablos B."/>
            <person name="Delcher A."/>
            <person name="Deng Z."/>
            <person name="Mays A.D."/>
            <person name="Dew I."/>
            <person name="Dietz S.M."/>
            <person name="Dodson K."/>
            <person name="Doup L.E."/>
            <person name="Downes M."/>
            <person name="Dugan-Rocha S."/>
            <person name="Dunkov B.C."/>
            <person name="Dunn P."/>
            <person name="Durbin K.J."/>
            <person name="Evangelista C.C."/>
            <person name="Ferraz C."/>
            <person name="Ferriera S."/>
            <person name="Fleischmann W."/>
            <person name="Fosler C."/>
            <person name="Gabrielian A.E."/>
            <person name="Garg N.S."/>
            <person name="Gelbart W.M."/>
            <person name="Glasser K."/>
            <person name="Glodek A."/>
            <person name="Gong F."/>
            <person name="Gorrell J.H."/>
            <person name="Gu Z."/>
            <person name="Guan P."/>
            <person name="Harris M."/>
            <person name="Harris N.L."/>
            <person name="Harvey D.A."/>
            <person name="Heiman T.J."/>
            <person name="Hernandez J.R."/>
            <person name="Houck J."/>
            <person name="Hostin D."/>
            <person name="Houston K.A."/>
            <person name="Howland T.J."/>
            <person name="Wei M.-H."/>
            <person name="Ibegwam C."/>
            <person name="Jalali M."/>
            <person name="Kalush F."/>
            <person name="Karpen G.H."/>
            <person name="Ke Z."/>
            <person name="Kennison J.A."/>
            <person name="Ketchum K.A."/>
            <person name="Kimmel B.E."/>
            <person name="Kodira C.D."/>
            <person name="Kraft C.L."/>
            <person name="Kravitz S."/>
            <person name="Kulp D."/>
            <person name="Lai Z."/>
            <person name="Lasko P."/>
            <person name="Lei Y."/>
            <person name="Levitsky A.A."/>
            <person name="Li J.H."/>
            <person name="Li Z."/>
            <person name="Liang Y."/>
            <person name="Lin X."/>
            <person name="Liu X."/>
            <person name="Mattei B."/>
            <person name="McIntosh T.C."/>
            <person name="McLeod M.P."/>
            <person name="McPherson D."/>
            <person name="Merkulov G."/>
            <person name="Milshina N.V."/>
            <person name="Mobarry C."/>
            <person name="Morris J."/>
            <person name="Moshrefi A."/>
            <person name="Mount S.M."/>
            <person name="Moy M."/>
            <person name="Murphy B."/>
            <person name="Murphy L."/>
            <person name="Muzny D.M."/>
            <person name="Nelson D.L."/>
            <person name="Nelson D.R."/>
            <person name="Nelson K.A."/>
            <person name="Nixon K."/>
            <person name="Nusskern D.R."/>
            <person name="Pacleb J.M."/>
            <person name="Palazzolo M."/>
            <person name="Pittman G.S."/>
            <person name="Pan S."/>
            <person name="Pollard J."/>
            <person name="Puri V."/>
            <person name="Reese M.G."/>
            <person name="Reinert K."/>
            <person name="Remington K."/>
            <person name="Saunders R.D.C."/>
            <person name="Scheeler F."/>
            <person name="Shen H."/>
            <person name="Shue B.C."/>
            <person name="Siden-Kiamos I."/>
            <person name="Simpson M."/>
            <person name="Skupski M.P."/>
            <person name="Smith T.J."/>
            <person name="Spier E."/>
            <person name="Spradling A.C."/>
            <person name="Stapleton M."/>
            <person name="Strong R."/>
            <person name="Sun E."/>
            <person name="Svirskas R."/>
            <person name="Tector C."/>
            <person name="Turner R."/>
            <person name="Venter E."/>
            <person name="Wang A.H."/>
            <person name="Wang X."/>
            <person name="Wang Z.-Y."/>
            <person name="Wassarman D.A."/>
            <person name="Weinstock G.M."/>
            <person name="Weissenbach J."/>
            <person name="Williams S.M."/>
            <person name="Woodage T."/>
            <person name="Worley K.C."/>
            <person name="Wu D."/>
            <person name="Yang S."/>
            <person name="Yao Q.A."/>
            <person name="Ye J."/>
            <person name="Yeh R.-F."/>
            <person name="Zaveri J.S."/>
            <person name="Zhan M."/>
            <person name="Zhang G."/>
            <person name="Zhao Q."/>
            <person name="Zheng L."/>
            <person name="Zheng X.H."/>
            <person name="Zhong F.N."/>
            <person name="Zhong W."/>
            <person name="Zhou X."/>
            <person name="Zhu S.C."/>
            <person name="Zhu X."/>
            <person name="Smith H.O."/>
            <person name="Gibbs R.A."/>
            <person name="Myers E.W."/>
            <person name="Rubin G.M."/>
            <person name="Venter J.C."/>
        </authorList>
    </citation>
    <scope>NUCLEOTIDE SEQUENCE [LARGE SCALE GENOMIC DNA]</scope>
    <source>
        <strain>Berkeley</strain>
    </source>
</reference>
<reference key="2">
    <citation type="journal article" date="2002" name="Genome Biol.">
        <title>Annotation of the Drosophila melanogaster euchromatic genome: a systematic review.</title>
        <authorList>
            <person name="Misra S."/>
            <person name="Crosby M.A."/>
            <person name="Mungall C.J."/>
            <person name="Matthews B.B."/>
            <person name="Campbell K.S."/>
            <person name="Hradecky P."/>
            <person name="Huang Y."/>
            <person name="Kaminker J.S."/>
            <person name="Millburn G.H."/>
            <person name="Prochnik S.E."/>
            <person name="Smith C.D."/>
            <person name="Tupy J.L."/>
            <person name="Whitfield E.J."/>
            <person name="Bayraktaroglu L."/>
            <person name="Berman B.P."/>
            <person name="Bettencourt B.R."/>
            <person name="Celniker S.E."/>
            <person name="de Grey A.D.N.J."/>
            <person name="Drysdale R.A."/>
            <person name="Harris N.L."/>
            <person name="Richter J."/>
            <person name="Russo S."/>
            <person name="Schroeder A.J."/>
            <person name="Shu S.Q."/>
            <person name="Stapleton M."/>
            <person name="Yamada C."/>
            <person name="Ashburner M."/>
            <person name="Gelbart W.M."/>
            <person name="Rubin G.M."/>
            <person name="Lewis S.E."/>
        </authorList>
    </citation>
    <scope>GENOME REANNOTATION</scope>
    <source>
        <strain>Berkeley</strain>
    </source>
</reference>
<reference key="3">
    <citation type="submission" date="2004-03" db="EMBL/GenBank/DDBJ databases">
        <authorList>
            <person name="Stapleton M."/>
            <person name="Carlson J.W."/>
            <person name="Chavez C."/>
            <person name="Frise E."/>
            <person name="George R.A."/>
            <person name="Pacleb J.M."/>
            <person name="Park S."/>
            <person name="Wan K.H."/>
            <person name="Yu C."/>
            <person name="Rubin G.M."/>
            <person name="Celniker S.E."/>
        </authorList>
    </citation>
    <scope>NUCLEOTIDE SEQUENCE [LARGE SCALE MRNA]</scope>
    <source>
        <strain>Berkeley</strain>
        <tissue>Head</tissue>
        <tissue>Testis</tissue>
    </source>
</reference>
<reference key="4">
    <citation type="journal article" date="2002" name="Genome Biol.">
        <title>A Drosophila full-length cDNA resource.</title>
        <authorList>
            <person name="Stapleton M."/>
            <person name="Carlson J.W."/>
            <person name="Brokstein P."/>
            <person name="Yu C."/>
            <person name="Champe M."/>
            <person name="George R.A."/>
            <person name="Guarin H."/>
            <person name="Kronmiller B."/>
            <person name="Pacleb J.M."/>
            <person name="Park S."/>
            <person name="Wan K.H."/>
            <person name="Rubin G.M."/>
            <person name="Celniker S.E."/>
        </authorList>
    </citation>
    <scope>NUCLEOTIDE SEQUENCE [LARGE SCALE MRNA] OF 222-710</scope>
    <source>
        <strain>Berkeley</strain>
        <tissue>Embryo</tissue>
    </source>
</reference>
<reference key="5">
    <citation type="journal article" date="2007" name="Mol. Biosyst.">
        <title>An integrated chemical, mass spectrometric and computational strategy for (quantitative) phosphoproteomics: application to Drosophila melanogaster Kc167 cells.</title>
        <authorList>
            <person name="Bodenmiller B."/>
            <person name="Mueller L.N."/>
            <person name="Pedrioli P.G.A."/>
            <person name="Pflieger D."/>
            <person name="Juenger M.A."/>
            <person name="Eng J.K."/>
            <person name="Aebersold R."/>
            <person name="Tao W.A."/>
        </authorList>
    </citation>
    <scope>PHOSPHORYLATION [LARGE SCALE ANALYSIS] AT SER-553</scope>
    <scope>IDENTIFICATION BY MASS SPECTROMETRY</scope>
</reference>
<reference key="6">
    <citation type="journal article" date="2008" name="J. Proteome Res.">
        <title>Phosphoproteome analysis of Drosophila melanogaster embryos.</title>
        <authorList>
            <person name="Zhai B."/>
            <person name="Villen J."/>
            <person name="Beausoleil S.A."/>
            <person name="Mintseris J."/>
            <person name="Gygi S.P."/>
        </authorList>
    </citation>
    <scope>PHOSPHORYLATION [LARGE SCALE ANALYSIS] AT THR-488</scope>
    <scope>IDENTIFICATION BY MASS SPECTROMETRY</scope>
    <source>
        <tissue>Embryo</tissue>
    </source>
</reference>
<evidence type="ECO:0000256" key="1">
    <source>
        <dbReference type="SAM" id="MobiDB-lite"/>
    </source>
</evidence>
<evidence type="ECO:0000269" key="2">
    <source>
    </source>
</evidence>
<evidence type="ECO:0000269" key="3">
    <source>
    </source>
</evidence>
<evidence type="ECO:0000305" key="4"/>
<accession>Q6NLL1</accession>
<accession>Q6NMV3</accession>
<accession>Q960Z3</accession>
<gene>
    <name type="ORF">CG11141</name>
</gene>
<name>Y1411_DROME</name>
<comment type="similarity">
    <text evidence="4">Belongs to the WD repeat KIAA0329 family.</text>
</comment>
<comment type="sequence caution" evidence="4">
    <conflict type="erroneous initiation">
        <sequence resource="EMBL-CDS" id="AAK93183"/>
    </conflict>
</comment>
<dbReference type="EMBL" id="AE013599">
    <property type="protein sequence ID" value="AAF59251.1"/>
    <property type="molecule type" value="Genomic_DNA"/>
</dbReference>
<dbReference type="EMBL" id="BT011551">
    <property type="protein sequence ID" value="AAS15687.1"/>
    <property type="molecule type" value="mRNA"/>
</dbReference>
<dbReference type="EMBL" id="BT012320">
    <property type="protein sequence ID" value="AAS77445.1"/>
    <property type="molecule type" value="mRNA"/>
</dbReference>
<dbReference type="EMBL" id="AY051759">
    <property type="protein sequence ID" value="AAK93183.1"/>
    <property type="status" value="ALT_INIT"/>
    <property type="molecule type" value="mRNA"/>
</dbReference>
<dbReference type="RefSeq" id="NP_001286159.1">
    <property type="nucleotide sequence ID" value="NM_001299230.1"/>
</dbReference>
<dbReference type="RefSeq" id="NP_610282.1">
    <property type="nucleotide sequence ID" value="NM_136438.4"/>
</dbReference>
<dbReference type="RefSeq" id="NP_724559.1">
    <property type="nucleotide sequence ID" value="NM_165525.3"/>
</dbReference>
<dbReference type="FunCoup" id="Q6NLL1">
    <property type="interactions" value="10"/>
</dbReference>
<dbReference type="IntAct" id="Q6NLL1">
    <property type="interactions" value="2"/>
</dbReference>
<dbReference type="STRING" id="7227.FBpp0311785"/>
<dbReference type="iPTMnet" id="Q6NLL1"/>
<dbReference type="PaxDb" id="7227-FBpp0088070"/>
<dbReference type="DNASU" id="35672"/>
<dbReference type="EnsemblMetazoa" id="FBtr0088998">
    <property type="protein sequence ID" value="FBpp0088070"/>
    <property type="gene ID" value="FBgn0033177"/>
</dbReference>
<dbReference type="EnsemblMetazoa" id="FBtr0088999">
    <property type="protein sequence ID" value="FBpp0088071"/>
    <property type="gene ID" value="FBgn0033177"/>
</dbReference>
<dbReference type="EnsemblMetazoa" id="FBtr0345799">
    <property type="protein sequence ID" value="FBpp0311785"/>
    <property type="gene ID" value="FBgn0033177"/>
</dbReference>
<dbReference type="GeneID" id="35672"/>
<dbReference type="KEGG" id="dme:Dmel_CG11141"/>
<dbReference type="UCSC" id="CG11141-RA">
    <property type="organism name" value="d. melanogaster"/>
</dbReference>
<dbReference type="UCSC" id="CG11141-RB">
    <property type="organism name" value="d. melanogaster"/>
</dbReference>
<dbReference type="AGR" id="FB:FBgn0033177"/>
<dbReference type="FlyBase" id="FBgn0033177">
    <property type="gene designation" value="CG11141"/>
</dbReference>
<dbReference type="VEuPathDB" id="VectorBase:FBgn0033177"/>
<dbReference type="eggNOG" id="KOG3621">
    <property type="taxonomic scope" value="Eukaryota"/>
</dbReference>
<dbReference type="GeneTree" id="ENSGT00940000157283"/>
<dbReference type="HOGENOM" id="CLU_026810_0_0_1"/>
<dbReference type="InParanoid" id="Q6NLL1"/>
<dbReference type="OMA" id="TEFDYQA"/>
<dbReference type="OrthoDB" id="9930272at2759"/>
<dbReference type="PhylomeDB" id="Q6NLL1"/>
<dbReference type="BioGRID-ORCS" id="35672">
    <property type="hits" value="0 hits in 3 CRISPR screens"/>
</dbReference>
<dbReference type="GenomeRNAi" id="35672"/>
<dbReference type="PRO" id="PR:Q6NLL1"/>
<dbReference type="Proteomes" id="UP000000803">
    <property type="component" value="Chromosome 2R"/>
</dbReference>
<dbReference type="Bgee" id="FBgn0033177">
    <property type="expression patterns" value="Expressed in head cyst cell (Drosophila) in testis and 87 other cell types or tissues"/>
</dbReference>
<dbReference type="ExpressionAtlas" id="Q6NLL1">
    <property type="expression patterns" value="baseline and differential"/>
</dbReference>
<dbReference type="GO" id="GO:0005737">
    <property type="term" value="C:cytoplasm"/>
    <property type="evidence" value="ECO:0007669"/>
    <property type="project" value="GOC"/>
</dbReference>
<dbReference type="GO" id="GO:0032527">
    <property type="term" value="P:protein exit from endoplasmic reticulum"/>
    <property type="evidence" value="ECO:0000250"/>
    <property type="project" value="FlyBase"/>
</dbReference>
<dbReference type="Gene3D" id="2.130.10.10">
    <property type="entry name" value="YVTN repeat-like/Quinoprotein amine dehydrogenase"/>
    <property type="match status" value="1"/>
</dbReference>
<dbReference type="InterPro" id="IPR056499">
    <property type="entry name" value="Beta-prop_HPS5-like"/>
</dbReference>
<dbReference type="InterPro" id="IPR015943">
    <property type="entry name" value="WD40/YVTN_repeat-like_dom_sf"/>
</dbReference>
<dbReference type="InterPro" id="IPR036322">
    <property type="entry name" value="WD40_repeat_dom_sf"/>
</dbReference>
<dbReference type="PANTHER" id="PTHR23287">
    <property type="entry name" value="RUBY-EYE2-LIKE PROTEIN"/>
    <property type="match status" value="1"/>
</dbReference>
<dbReference type="PANTHER" id="PTHR23287:SF16">
    <property type="entry name" value="TECTONIN BETA-PROPELLER REPEAT-CONTAINING PROTEIN 2"/>
    <property type="match status" value="1"/>
</dbReference>
<dbReference type="Pfam" id="PF23756">
    <property type="entry name" value="Beta-prop_HPS5"/>
    <property type="match status" value="1"/>
</dbReference>
<dbReference type="SUPFAM" id="SSF50978">
    <property type="entry name" value="WD40 repeat-like"/>
    <property type="match status" value="1"/>
</dbReference>
<keyword id="KW-0597">Phosphoprotein</keyword>
<keyword id="KW-1185">Reference proteome</keyword>
<keyword id="KW-0677">Repeat</keyword>
<keyword id="KW-0853">WD repeat</keyword>
<organism>
    <name type="scientific">Drosophila melanogaster</name>
    <name type="common">Fruit fly</name>
    <dbReference type="NCBI Taxonomy" id="7227"/>
    <lineage>
        <taxon>Eukaryota</taxon>
        <taxon>Metazoa</taxon>
        <taxon>Ecdysozoa</taxon>
        <taxon>Arthropoda</taxon>
        <taxon>Hexapoda</taxon>
        <taxon>Insecta</taxon>
        <taxon>Pterygota</taxon>
        <taxon>Neoptera</taxon>
        <taxon>Endopterygota</taxon>
        <taxon>Diptera</taxon>
        <taxon>Brachycera</taxon>
        <taxon>Muscomorpha</taxon>
        <taxon>Ephydroidea</taxon>
        <taxon>Drosophilidae</taxon>
        <taxon>Drosophila</taxon>
        <taxon>Sophophora</taxon>
    </lineage>
</organism>
<feature type="chain" id="PRO_0000351218" description="WD repeat-containing protein CG11141">
    <location>
        <begin position="1"/>
        <end position="710"/>
    </location>
</feature>
<feature type="repeat" description="WD 1">
    <location>
        <begin position="31"/>
        <end position="70"/>
    </location>
</feature>
<feature type="repeat" description="WD 2">
    <location>
        <begin position="133"/>
        <end position="172"/>
    </location>
</feature>
<feature type="region of interest" description="Disordered" evidence="1">
    <location>
        <begin position="283"/>
        <end position="307"/>
    </location>
</feature>
<feature type="region of interest" description="Disordered" evidence="1">
    <location>
        <begin position="612"/>
        <end position="635"/>
    </location>
</feature>
<feature type="region of interest" description="Disordered" evidence="1">
    <location>
        <begin position="685"/>
        <end position="710"/>
    </location>
</feature>
<feature type="compositionally biased region" description="Low complexity" evidence="1">
    <location>
        <begin position="292"/>
        <end position="307"/>
    </location>
</feature>
<feature type="compositionally biased region" description="Polar residues" evidence="1">
    <location>
        <begin position="613"/>
        <end position="624"/>
    </location>
</feature>
<feature type="compositionally biased region" description="Polar residues" evidence="1">
    <location>
        <begin position="694"/>
        <end position="704"/>
    </location>
</feature>
<feature type="modified residue" description="Phosphothreonine" evidence="3">
    <location>
        <position position="488"/>
    </location>
</feature>
<feature type="modified residue" description="Phosphoserine" evidence="2">
    <location>
        <position position="553"/>
    </location>
</feature>
<sequence>MASSKELCSIREWAPLTEVIERIPARLQRGFFPANLNLTCVDATEEFLAMGSDAGIVFWYNRHTGEMQKLKAEVATRITCVRVVNSVEYMVAAGCANGQVSIFQIQKELPRDLDLVAPCTKSRPIERYTIRDLHKCVVSCCEWSKNGMKLYSGDRQGVVVLTELDYQAHLSKSVEILSEAYEIVQLSVRQSYLLVATLYRCIVCQMDAQTSQWNITQVGKKDRKQLIDCGAIFLKKQEANKPQLVCGRPGLRFWVADAAGNVSKTVIFRDAVLRSPTWEIPILNPKQRSEPSGTHHTSASTSSTRHSGLADGDVGYVASSNFRQLYLYDGHDSLLVTHDDATLYVLNLDRLKVEAVARGLRKILDFCVCGKEIFVLEGNRTLLRLAPLPEPPNKTAKVIFNPLMPPPVPVLGSHLSQLESPIELQAEPVLQNAEECFELSPVEQLNLNVPIEIAVESPLTQQNRRLEIFRRIGEMDFEQSIVHTTRKTSVGKPPEASGVGIVEIGHETHELRLPLTNAATLMEASYCQMENNGLASPLDMKAAFLQHLPDALSPTTLQKTVAEKAKTLAAELDLPEVHLAPLSQEELHAVQAQTPQISDPLIRCYPTHLEEASIQTSSRENATNPADDYHVGEPVDGIRSFGVSKRKMAPLKFVLSQPKPTLKLEENRDDEEYTSFLPDFRRAGDPLAIHKETPATSDSNTSSEWEFLDN</sequence>
<proteinExistence type="evidence at protein level"/>
<protein>
    <recommendedName>
        <fullName>WD repeat-containing protein CG11141</fullName>
    </recommendedName>
</protein>